<dbReference type="EMBL" id="KM222358">
    <property type="protein sequence ID" value="AIZ03605.1"/>
    <property type="molecule type" value="Genomic_DNA"/>
</dbReference>
<dbReference type="PDB" id="6NUD">
    <property type="method" value="EM"/>
    <property type="resolution" value="3.50 A"/>
    <property type="chains" value="A/B/M=1-121"/>
</dbReference>
<dbReference type="PDB" id="6NUE">
    <property type="method" value="EM"/>
    <property type="resolution" value="3.30 A"/>
    <property type="chains" value="A/B/M=1-121"/>
</dbReference>
<dbReference type="PDBsum" id="6NUD"/>
<dbReference type="PDBsum" id="6NUE"/>
<dbReference type="EMDB" id="EMD-0516"/>
<dbReference type="EMDB" id="EMD-0519"/>
<dbReference type="SMR" id="A0A0A7HIX1"/>
<dbReference type="GO" id="GO:0003723">
    <property type="term" value="F:RNA binding"/>
    <property type="evidence" value="ECO:0007669"/>
    <property type="project" value="UniProtKB-KW"/>
</dbReference>
<dbReference type="GO" id="GO:0051607">
    <property type="term" value="P:defense response to virus"/>
    <property type="evidence" value="ECO:0007669"/>
    <property type="project" value="UniProtKB-KW"/>
</dbReference>
<dbReference type="CDD" id="cd09647">
    <property type="entry name" value="Csm2_III-A"/>
    <property type="match status" value="1"/>
</dbReference>
<dbReference type="InterPro" id="IPR010149">
    <property type="entry name" value="CRISPR-assoc_prot_Csm2_III-A"/>
</dbReference>
<dbReference type="NCBIfam" id="TIGR01870">
    <property type="entry name" value="cas_TM1810_Csm2"/>
    <property type="match status" value="1"/>
</dbReference>
<dbReference type="Pfam" id="PF03750">
    <property type="entry name" value="Csm2_III-A"/>
    <property type="match status" value="1"/>
</dbReference>
<feature type="chain" id="PRO_0000446117" description="CRISPR system Cms protein Csm2">
    <location>
        <begin position="1"/>
        <end position="121"/>
    </location>
</feature>
<feature type="turn" evidence="8">
    <location>
        <begin position="15"/>
        <end position="21"/>
    </location>
</feature>
<feature type="strand" evidence="8">
    <location>
        <begin position="24"/>
        <end position="27"/>
    </location>
</feature>
<feature type="turn" evidence="8">
    <location>
        <begin position="34"/>
        <end position="37"/>
    </location>
</feature>
<feature type="helix" evidence="8">
    <location>
        <begin position="38"/>
        <end position="41"/>
    </location>
</feature>
<feature type="helix" evidence="8">
    <location>
        <begin position="43"/>
        <end position="49"/>
    </location>
</feature>
<feature type="turn" evidence="8">
    <location>
        <begin position="54"/>
        <end position="57"/>
    </location>
</feature>
<feature type="helix" evidence="8">
    <location>
        <begin position="58"/>
        <end position="71"/>
    </location>
</feature>
<feature type="turn" evidence="8">
    <location>
        <begin position="72"/>
        <end position="74"/>
    </location>
</feature>
<feature type="helix" evidence="8">
    <location>
        <begin position="76"/>
        <end position="85"/>
    </location>
</feature>
<feature type="helix" evidence="8">
    <location>
        <begin position="87"/>
        <end position="93"/>
    </location>
</feature>
<feature type="helix" evidence="8">
    <location>
        <begin position="97"/>
        <end position="117"/>
    </location>
</feature>
<reference key="1">
    <citation type="journal article" date="2014" name="Mol. Cell">
        <title>Programmable RNA shredding by the type III-A CRISPR-Cas system of Streptococcus thermophilus.</title>
        <authorList>
            <person name="Tamulaitis G."/>
            <person name="Kazlauskiene M."/>
            <person name="Manakova E."/>
            <person name="Venclovas C."/>
            <person name="Nwokeoji A.O."/>
            <person name="Dickman M.J."/>
            <person name="Horvath P."/>
            <person name="Siksnys V."/>
        </authorList>
    </citation>
    <scope>NUCLEOTIDE SEQUENCE [GENOMIC DNA]</scope>
    <scope>FUNCTION IN PHAGE RESISTANCE</scope>
    <scope>TARGETS SSRNA</scope>
    <scope>SUBUNIT</scope>
    <scope>ANTIVIRAL DEFENSE</scope>
    <source>
        <strain>DGCC8004</strain>
    </source>
</reference>
<reference key="2">
    <citation type="journal article" date="2016" name="Mol. Cell">
        <title>Spatiotemporal control of type III-A CRISPR-Cas immunity: coupling DNA degradation with the target RNA recognition.</title>
        <authorList>
            <person name="Kazlauskiene M."/>
            <person name="Tamulaitis G."/>
            <person name="Kostiuk G."/>
            <person name="Venclovas C."/>
            <person name="Siksnys V."/>
        </authorList>
    </citation>
    <scope>FUNCTION</scope>
    <scope>SUBUNIT</scope>
    <source>
        <strain>DGCC8004</strain>
    </source>
</reference>
<reference key="3">
    <citation type="journal article" date="2017" name="Science">
        <title>A cyclic oligonucleotide signaling pathway in type III CRISPR-Cas systems.</title>
        <authorList>
            <person name="Kazlauskiene M."/>
            <person name="Kostiuk G."/>
            <person name="Venclovas C."/>
            <person name="Tamulaitis G."/>
            <person name="Siksnys V."/>
        </authorList>
    </citation>
    <scope>SUBUNIT</scope>
    <source>
        <strain>DGCC8004</strain>
    </source>
</reference>
<sequence>MAILTDENYVDKAERAISLLEKDNKGNYLLTTSQIRKLLSLCSSLYDRSKERKFDELINDVSYLRVQFVYQAGREIAVKDLIEKAQILEALKEIKDRETLQRFCRYMEALVAYFKFYGGKD</sequence>
<name>CSM2_STRTR</name>
<keyword id="KW-0002">3D-structure</keyword>
<keyword id="KW-0051">Antiviral defense</keyword>
<keyword id="KW-0694">RNA-binding</keyword>
<protein>
    <recommendedName>
        <fullName>CRISPR system Cms protein Csm2</fullName>
    </recommendedName>
    <alternativeName>
        <fullName>CRISPR type III A-associated protein Csm2</fullName>
    </alternativeName>
</protein>
<accession>A0A0A7HIX1</accession>
<gene>
    <name evidence="4" type="primary">csm2</name>
</gene>
<organism>
    <name type="scientific">Streptococcus thermophilus</name>
    <dbReference type="NCBI Taxonomy" id="1308"/>
    <lineage>
        <taxon>Bacteria</taxon>
        <taxon>Bacillati</taxon>
        <taxon>Bacillota</taxon>
        <taxon>Bacilli</taxon>
        <taxon>Lactobacillales</taxon>
        <taxon>Streptococcaceae</taxon>
        <taxon>Streptococcus</taxon>
    </lineage>
</organism>
<evidence type="ECO:0000269" key="1">
    <source>
    </source>
</evidence>
<evidence type="ECO:0000269" key="2">
    <source>
    </source>
</evidence>
<evidence type="ECO:0000269" key="3">
    <source>
    </source>
</evidence>
<evidence type="ECO:0000303" key="4">
    <source>
    </source>
</evidence>
<evidence type="ECO:0000305" key="5"/>
<evidence type="ECO:0000305" key="6">
    <source>
    </source>
</evidence>
<evidence type="ECO:0000305" key="7">
    <source>
    </source>
</evidence>
<evidence type="ECO:0007829" key="8">
    <source>
        <dbReference type="PDB" id="6NUE"/>
    </source>
</evidence>
<proteinExistence type="evidence at protein level"/>
<comment type="function">
    <text evidence="1">CRISPR (clustered regularly interspaced short palindromic repeat) is an adaptive immune system that provides protection against mobile genetic elements (viruses, transposable elements and conjugative plasmids). CRISPR clusters contain spacers, sequences complementary to antecedent mobile elements, and target invading nucleic acids. CRISPR clusters are transcribed and processed into CRISPR RNA (crRNA). The type III-A Csm effector complex binds crRNA and acts as a crRNA-guided RNase, DNase and cyclic oligoadenylate synthase; binding of target RNA cognate to the crRNA is required for all activities. In a heterologous host this Csm effector complex restricts ssRNA phage MS2, suggesting it may target RNA viruses in vivo.</text>
</comment>
<comment type="function">
    <text evidence="2">Csm functions as a non-specific ssDNase. Base-pairing between crRNA and target RNA to form a ternary Csm complex activates a ssDNase activity; target RNA cleavage suppresses the ssDNase, a temporal control that prevents uncontrolled DNA degradation. Viral RNA transcripts probably tether the Csm complex to the viral genome, recruiting Cas10 ssDNA activity which is able to degrade DNA in the transcription bubble, spatially controlling the DNase activity.</text>
</comment>
<comment type="function">
    <text evidence="7">This subunit may be involved in monitoring complementarity of crRNA and target RNA.</text>
</comment>
<comment type="subunit">
    <text evidence="1 2 3 6 7">Part of the Csm effector complex that includes at least Cas10(1), Csm2(3), Csm3(5), Csm4(1), Csm5(1) and mature crRNA (PubMed:25458845, PubMed:27105119, PubMed:28663439). The Csm complex is elongated and slightly twisted with a maximal length of 215 Angstroms and a diameter of 75-80 Angstroms (PubMed:25458845). It has been modeled to have a central protein filamant of Csm3 subunits along which the dsRNA helix of paired crRNA and target RNA binds. The filament is capped at one end by Cas10 and Csm4 and at the other end by Csm5; ssDNA is thought to bind to the N-terminal HD domain of Cas10 (Probable). Csm with a precursor crRNA does not include Csm5, while Cas6, the enzyme probably involved in pre-crRNA processing, is found associated with a subset of the Csm complex (PubMed:25458845).</text>
</comment>
<comment type="miscellaneous">
    <text evidence="1">Encoded in a type III-A CRISPR locus.</text>
</comment>
<comment type="similarity">
    <text evidence="5">Belongs to the CRISPR-associated Csm2 family.</text>
</comment>